<organism>
    <name type="scientific">Sulfurisphaera tokodaii (strain DSM 16993 / JCM 10545 / NBRC 100140 / 7)</name>
    <name type="common">Sulfolobus tokodaii</name>
    <dbReference type="NCBI Taxonomy" id="273063"/>
    <lineage>
        <taxon>Archaea</taxon>
        <taxon>Thermoproteota</taxon>
        <taxon>Thermoprotei</taxon>
        <taxon>Sulfolobales</taxon>
        <taxon>Sulfolobaceae</taxon>
        <taxon>Sulfurisphaera</taxon>
    </lineage>
</organism>
<gene>
    <name evidence="1" type="primary">lysJ</name>
    <name type="ordered locus">STK_01910</name>
</gene>
<sequence length="387" mass="42935">MKFIQLYGDRGLTIVKGEGQYVWDISGTKYLDLHTGIGVAFLGHRNRRVIEYLSRQMENIMTLSTSFSTPIRDEMLKELDPLKPDKMDNIILLNSGTEAVEAALKTARKITGRKKIIAFKNSFHGRTAGSLSVTWNKRYREPFEPLMSPVQFLTYNNIDELKNIDEQTAAVIVEPIQGESGVIPANEDFMKALREQTQKVGALLVVDEVQTGFGRTGKVWAYQHYGIIPDLLTAGKAIGGGFPVSALFLPDWIAEKLEEGDHGSTYGGNPMAMAAVTAASKVLKEDNVVEQASIKGEIFKKILREKLSDLKSVREIRGKGLMIGIEIRFPPAIALKVMQDERVLALKAGSTVIRFLAPYMITQSDMEEASNAARKGIIETENKRAIT</sequence>
<evidence type="ECO:0000255" key="1">
    <source>
        <dbReference type="HAMAP-Rule" id="MF_02084"/>
    </source>
</evidence>
<name>LYSJ_SULTO</name>
<feature type="chain" id="PRO_0000112831" description="[LysW]-aminoadipate semialdehyde/glutamate semialdehyde transaminase">
    <location>
        <begin position="1"/>
        <end position="387"/>
    </location>
</feature>
<feature type="binding site" evidence="1">
    <location>
        <begin position="96"/>
        <end position="97"/>
    </location>
    <ligand>
        <name>pyridoxal 5'-phosphate</name>
        <dbReference type="ChEBI" id="CHEBI:597326"/>
    </ligand>
</feature>
<feature type="binding site" evidence="1">
    <location>
        <position position="123"/>
    </location>
    <ligand>
        <name>pyridoxal 5'-phosphate</name>
        <dbReference type="ChEBI" id="CHEBI:597326"/>
    </ligand>
</feature>
<feature type="binding site" evidence="1">
    <location>
        <position position="126"/>
    </location>
    <ligand>
        <name>substrate</name>
    </ligand>
</feature>
<feature type="binding site" evidence="1">
    <location>
        <begin position="207"/>
        <end position="210"/>
    </location>
    <ligand>
        <name>pyridoxal 5'-phosphate</name>
        <dbReference type="ChEBI" id="CHEBI:597326"/>
    </ligand>
</feature>
<feature type="binding site" evidence="1">
    <location>
        <position position="264"/>
    </location>
    <ligand>
        <name>substrate</name>
    </ligand>
</feature>
<feature type="binding site" evidence="1">
    <location>
        <position position="265"/>
    </location>
    <ligand>
        <name>pyridoxal 5'-phosphate</name>
        <dbReference type="ChEBI" id="CHEBI:597326"/>
    </ligand>
</feature>
<feature type="modified residue" description="N6-(pyridoxal phosphate)lysine" evidence="1">
    <location>
        <position position="236"/>
    </location>
</feature>
<protein>
    <recommendedName>
        <fullName evidence="1">[LysW]-aminoadipate semialdehyde/glutamate semialdehyde transaminase</fullName>
        <ecNumber evidence="1">2.6.1.118</ecNumber>
        <ecNumber evidence="1">2.6.1.124</ecNumber>
    </recommendedName>
</protein>
<comment type="function">
    <text evidence="1">Involved in both the arginine and lysine biosynthetic pathways.</text>
</comment>
<comment type="catalytic activity">
    <reaction evidence="1">
        <text>[amino-group carrier protein]-C-terminal-gamma-(L-lysyl)-L-glutamate + 2-oxoglutarate = [amino-group carrier protein]-C-terminal-N-(1-carboxy-5-oxopentan-1-yl)-L-glutamine + L-glutamate</text>
        <dbReference type="Rhea" id="RHEA:41952"/>
        <dbReference type="Rhea" id="RHEA-COMP:9714"/>
        <dbReference type="Rhea" id="RHEA-COMP:9715"/>
        <dbReference type="ChEBI" id="CHEBI:16810"/>
        <dbReference type="ChEBI" id="CHEBI:29985"/>
        <dbReference type="ChEBI" id="CHEBI:78501"/>
        <dbReference type="ChEBI" id="CHEBI:78526"/>
        <dbReference type="EC" id="2.6.1.118"/>
    </reaction>
</comment>
<comment type="catalytic activity">
    <reaction evidence="1">
        <text>[amino-group carrier protein]-C-terminal-gamma-(L-ornithyl)-L-glutamate + 2-oxoglutarate = [amino-group carrier protein]-C-terminal-gamma-(L-glutamyl-5-semialdehyde)-L-glutamate + L-glutamate</text>
        <dbReference type="Rhea" id="RHEA:52672"/>
        <dbReference type="Rhea" id="RHEA-COMP:13327"/>
        <dbReference type="Rhea" id="RHEA-COMP:13328"/>
        <dbReference type="ChEBI" id="CHEBI:16810"/>
        <dbReference type="ChEBI" id="CHEBI:29985"/>
        <dbReference type="ChEBI" id="CHEBI:136761"/>
        <dbReference type="ChEBI" id="CHEBI:136763"/>
        <dbReference type="EC" id="2.6.1.124"/>
    </reaction>
</comment>
<comment type="cofactor">
    <cofactor evidence="1">
        <name>pyridoxal 5'-phosphate</name>
        <dbReference type="ChEBI" id="CHEBI:597326"/>
    </cofactor>
    <text evidence="1">Binds 1 pyridoxal phosphate per subunit.</text>
</comment>
<comment type="pathway">
    <text evidence="1">Amino-acid biosynthesis; L-lysine biosynthesis via AAA pathway; L-lysine from L-alpha-aminoadipate (Thermus route): step 4/5.</text>
</comment>
<comment type="pathway">
    <text evidence="1">Amino-acid biosynthesis; L-arginine biosynthesis.</text>
</comment>
<comment type="subunit">
    <text evidence="1">Homodimer.</text>
</comment>
<comment type="subcellular location">
    <subcellularLocation>
        <location evidence="1">Cytoplasm</location>
    </subcellularLocation>
</comment>
<comment type="similarity">
    <text evidence="1">Belongs to the class-III pyridoxal-phosphate-dependent aminotransferase family. LysJ subfamily.</text>
</comment>
<keyword id="KW-0028">Amino-acid biosynthesis</keyword>
<keyword id="KW-0032">Aminotransferase</keyword>
<keyword id="KW-0055">Arginine biosynthesis</keyword>
<keyword id="KW-0963">Cytoplasm</keyword>
<keyword id="KW-0457">Lysine biosynthesis</keyword>
<keyword id="KW-0663">Pyridoxal phosphate</keyword>
<keyword id="KW-1185">Reference proteome</keyword>
<keyword id="KW-0808">Transferase</keyword>
<proteinExistence type="inferred from homology"/>
<accession>Q976K0</accession>
<accession>F9VMN6</accession>
<dbReference type="EC" id="2.6.1.118" evidence="1"/>
<dbReference type="EC" id="2.6.1.124" evidence="1"/>
<dbReference type="EMBL" id="BA000023">
    <property type="protein sequence ID" value="BAK54182.1"/>
    <property type="molecule type" value="Genomic_DNA"/>
</dbReference>
<dbReference type="RefSeq" id="WP_010978129.1">
    <property type="nucleotide sequence ID" value="NC_003106.2"/>
</dbReference>
<dbReference type="SMR" id="Q976K0"/>
<dbReference type="STRING" id="273063.STK_01910"/>
<dbReference type="GeneID" id="1458075"/>
<dbReference type="KEGG" id="sto:STK_01910"/>
<dbReference type="PATRIC" id="fig|273063.9.peg.234"/>
<dbReference type="eggNOG" id="arCOG00914">
    <property type="taxonomic scope" value="Archaea"/>
</dbReference>
<dbReference type="OrthoDB" id="6534at2157"/>
<dbReference type="UniPathway" id="UPA00033">
    <property type="reaction ID" value="UER00038"/>
</dbReference>
<dbReference type="UniPathway" id="UPA00068"/>
<dbReference type="Proteomes" id="UP000001015">
    <property type="component" value="Chromosome"/>
</dbReference>
<dbReference type="GO" id="GO:0005737">
    <property type="term" value="C:cytoplasm"/>
    <property type="evidence" value="ECO:0007669"/>
    <property type="project" value="UniProtKB-SubCell"/>
</dbReference>
<dbReference type="GO" id="GO:0042802">
    <property type="term" value="F:identical protein binding"/>
    <property type="evidence" value="ECO:0007669"/>
    <property type="project" value="TreeGrafter"/>
</dbReference>
<dbReference type="GO" id="GO:0030170">
    <property type="term" value="F:pyridoxal phosphate binding"/>
    <property type="evidence" value="ECO:0007669"/>
    <property type="project" value="InterPro"/>
</dbReference>
<dbReference type="GO" id="GO:0008483">
    <property type="term" value="F:transaminase activity"/>
    <property type="evidence" value="ECO:0007669"/>
    <property type="project" value="UniProtKB-UniRule"/>
</dbReference>
<dbReference type="GO" id="GO:0042450">
    <property type="term" value="P:arginine biosynthetic process via ornithine"/>
    <property type="evidence" value="ECO:0007669"/>
    <property type="project" value="UniProtKB-UniRule"/>
</dbReference>
<dbReference type="GO" id="GO:0006526">
    <property type="term" value="P:L-arginine biosynthetic process"/>
    <property type="evidence" value="ECO:0007669"/>
    <property type="project" value="UniProtKB-UniPathway"/>
</dbReference>
<dbReference type="GO" id="GO:0019878">
    <property type="term" value="P:lysine biosynthetic process via aminoadipic acid"/>
    <property type="evidence" value="ECO:0007669"/>
    <property type="project" value="UniProtKB-UniRule"/>
</dbReference>
<dbReference type="CDD" id="cd00610">
    <property type="entry name" value="OAT_like"/>
    <property type="match status" value="1"/>
</dbReference>
<dbReference type="FunFam" id="3.40.640.10:FF:000004">
    <property type="entry name" value="Acetylornithine aminotransferase"/>
    <property type="match status" value="1"/>
</dbReference>
<dbReference type="Gene3D" id="3.90.1150.10">
    <property type="entry name" value="Aspartate Aminotransferase, domain 1"/>
    <property type="match status" value="1"/>
</dbReference>
<dbReference type="Gene3D" id="3.40.640.10">
    <property type="entry name" value="Type I PLP-dependent aspartate aminotransferase-like (Major domain)"/>
    <property type="match status" value="1"/>
</dbReference>
<dbReference type="HAMAP" id="MF_02084">
    <property type="entry name" value="LysJ_aminotrans_3"/>
    <property type="match status" value="1"/>
</dbReference>
<dbReference type="InterPro" id="IPR004636">
    <property type="entry name" value="AcOrn/SuccOrn_fam"/>
</dbReference>
<dbReference type="InterPro" id="IPR005814">
    <property type="entry name" value="Aminotrans_3"/>
</dbReference>
<dbReference type="InterPro" id="IPR049704">
    <property type="entry name" value="Aminotrans_3_PPA_site"/>
</dbReference>
<dbReference type="InterPro" id="IPR050103">
    <property type="entry name" value="Class-III_PLP-dep_AT"/>
</dbReference>
<dbReference type="InterPro" id="IPR053458">
    <property type="entry name" value="Class-III_PLP-Dep_Atrans_LysJ"/>
</dbReference>
<dbReference type="InterPro" id="IPR037537">
    <property type="entry name" value="LysJ"/>
</dbReference>
<dbReference type="InterPro" id="IPR015424">
    <property type="entry name" value="PyrdxlP-dep_Trfase"/>
</dbReference>
<dbReference type="InterPro" id="IPR015421">
    <property type="entry name" value="PyrdxlP-dep_Trfase_major"/>
</dbReference>
<dbReference type="InterPro" id="IPR015422">
    <property type="entry name" value="PyrdxlP-dep_Trfase_small"/>
</dbReference>
<dbReference type="NCBIfam" id="TIGR00707">
    <property type="entry name" value="argD"/>
    <property type="match status" value="1"/>
</dbReference>
<dbReference type="NCBIfam" id="NF045491">
    <property type="entry name" value="LysJ_Sulfobales"/>
    <property type="match status" value="1"/>
</dbReference>
<dbReference type="PANTHER" id="PTHR11986:SF79">
    <property type="entry name" value="ACETYLORNITHINE AMINOTRANSFERASE, MITOCHONDRIAL"/>
    <property type="match status" value="1"/>
</dbReference>
<dbReference type="PANTHER" id="PTHR11986">
    <property type="entry name" value="AMINOTRANSFERASE CLASS III"/>
    <property type="match status" value="1"/>
</dbReference>
<dbReference type="Pfam" id="PF00202">
    <property type="entry name" value="Aminotran_3"/>
    <property type="match status" value="1"/>
</dbReference>
<dbReference type="PIRSF" id="PIRSF000521">
    <property type="entry name" value="Transaminase_4ab_Lys_Orn"/>
    <property type="match status" value="1"/>
</dbReference>
<dbReference type="SUPFAM" id="SSF53383">
    <property type="entry name" value="PLP-dependent transferases"/>
    <property type="match status" value="1"/>
</dbReference>
<dbReference type="PROSITE" id="PS00600">
    <property type="entry name" value="AA_TRANSFER_CLASS_3"/>
    <property type="match status" value="1"/>
</dbReference>
<reference key="1">
    <citation type="journal article" date="2001" name="DNA Res.">
        <title>Complete genome sequence of an aerobic thermoacidophilic Crenarchaeon, Sulfolobus tokodaii strain7.</title>
        <authorList>
            <person name="Kawarabayasi Y."/>
            <person name="Hino Y."/>
            <person name="Horikawa H."/>
            <person name="Jin-no K."/>
            <person name="Takahashi M."/>
            <person name="Sekine M."/>
            <person name="Baba S."/>
            <person name="Ankai A."/>
            <person name="Kosugi H."/>
            <person name="Hosoyama A."/>
            <person name="Fukui S."/>
            <person name="Nagai Y."/>
            <person name="Nishijima K."/>
            <person name="Otsuka R."/>
            <person name="Nakazawa H."/>
            <person name="Takamiya M."/>
            <person name="Kato Y."/>
            <person name="Yoshizawa T."/>
            <person name="Tanaka T."/>
            <person name="Kudoh Y."/>
            <person name="Yamazaki J."/>
            <person name="Kushida N."/>
            <person name="Oguchi A."/>
            <person name="Aoki K."/>
            <person name="Masuda S."/>
            <person name="Yanagii M."/>
            <person name="Nishimura M."/>
            <person name="Yamagishi A."/>
            <person name="Oshima T."/>
            <person name="Kikuchi H."/>
        </authorList>
    </citation>
    <scope>NUCLEOTIDE SEQUENCE [LARGE SCALE GENOMIC DNA]</scope>
    <source>
        <strain>DSM 16993 / JCM 10545 / NBRC 100140 / 7</strain>
    </source>
</reference>